<protein>
    <recommendedName>
        <fullName evidence="2">Cysteine desulfurase</fullName>
        <ecNumber evidence="2">2.8.1.7</ecNumber>
    </recommendedName>
    <alternativeName>
        <fullName evidence="2">Nitrogenase metalloclusters biosynthesis protein NifS</fullName>
    </alternativeName>
</protein>
<keyword id="KW-0408">Iron</keyword>
<keyword id="KW-0411">Iron-sulfur</keyword>
<keyword id="KW-0479">Metal-binding</keyword>
<keyword id="KW-0535">Nitrogen fixation</keyword>
<keyword id="KW-0663">Pyridoxal phosphate</keyword>
<keyword id="KW-0808">Transferase</keyword>
<sequence length="397" mass="43254">MKQVYLDNNATTRLDPMVLEAMMPFLTDFYGNPSSIHDFGIPAQAALERAHQQAAALLGAEYPSEIIFTSWPRATPRHAAIALLPERREIITSVVEHPATLAACEHLERQGYRIHRIAVDSEGALDMAQFRAALSPRVALVSVMWANNETGVLFPIGEMAELAHEQGALFHCDAVQVVGKIPIAVGQTRIDMLSCSAHKFHGPKGVGCLYLRRGTRFRPLLRGGHQEYGRRAGTENICGIVGMGAACELANIHLPGMTHIGQLRNRLEHRLLASVPSVMVMGGGQPRVPGTVNLAFEFIEGEAILLLLNQAGIAASSGSACTSGSLEPSHVMRAMNIPYTAAHGTIRFSLSRYTREKEIDYVVATLPPIIDRLRALSPYWQNGKPRPADAVFTPVYG</sequence>
<reference key="1">
    <citation type="journal article" date="1988" name="Nucleic Acids Res.">
        <title>The nucleotide sequence of the nifT, nifY, nifX and nifW genes of K. pneumoniae.</title>
        <authorList>
            <person name="Beynon J."/>
            <person name="Cannon M."/>
            <person name="Banan-Wollaston V."/>
            <person name="Ally A."/>
            <person name="Sutterquist R."/>
            <person name="Cannon F."/>
        </authorList>
    </citation>
    <scope>NUCLEOTIDE SEQUENCE [GENOMIC DNA]</scope>
</reference>
<reference key="2">
    <citation type="journal article" date="1987" name="J. Bacteriol.">
        <title>Comparative organization of nitrogen fixation-specific genes from Azotobacter vinelandii and Klebsiella pneumoniae: DNA sequence of the nifUSV genes.</title>
        <authorList>
            <person name="Beynon J."/>
            <person name="Ally A."/>
            <person name="Cannon M."/>
            <person name="Cannon F."/>
            <person name="Jacobson M.R."/>
            <person name="Cash V.L."/>
            <person name="Dean D.R."/>
        </authorList>
    </citation>
    <scope>NUCLEOTIDE SEQUENCE [GENOMIC DNA]</scope>
</reference>
<reference key="3">
    <citation type="journal article" date="1988" name="J. Mol. Biol.">
        <title>Nucleotide sequence of a 24,206-base-pair DNA fragment carrying the entire nitrogen fixation gene cluster of Klebsiella pneumoniae.</title>
        <authorList>
            <person name="Arnold W."/>
            <person name="Rump A."/>
            <person name="Klipp W."/>
            <person name="Priefer U.B."/>
            <person name="Puehler A."/>
        </authorList>
    </citation>
    <scope>NUCLEOTIDE SEQUENCE [GENOMIC DNA]</scope>
</reference>
<evidence type="ECO:0000250" key="1">
    <source>
        <dbReference type="UniProtKB" id="O29689"/>
    </source>
</evidence>
<evidence type="ECO:0000250" key="2">
    <source>
        <dbReference type="UniProtKB" id="P05341"/>
    </source>
</evidence>
<evidence type="ECO:0000250" key="3">
    <source>
        <dbReference type="UniProtKB" id="P0A6B9"/>
    </source>
</evidence>
<evidence type="ECO:0000305" key="4"/>
<comment type="function">
    <text evidence="2">Catalyzes the removal of elemental sulfur atoms from cysteine to produce alanine. Seems to participate in the biosynthesis of the nitrogenase metalloclusters by providing the inorganic sulfur required for the Fe-S core formation.</text>
</comment>
<comment type="catalytic activity">
    <reaction evidence="2">
        <text>(sulfur carrier)-H + L-cysteine = (sulfur carrier)-SH + L-alanine</text>
        <dbReference type="Rhea" id="RHEA:43892"/>
        <dbReference type="Rhea" id="RHEA-COMP:14737"/>
        <dbReference type="Rhea" id="RHEA-COMP:14739"/>
        <dbReference type="ChEBI" id="CHEBI:29917"/>
        <dbReference type="ChEBI" id="CHEBI:35235"/>
        <dbReference type="ChEBI" id="CHEBI:57972"/>
        <dbReference type="ChEBI" id="CHEBI:64428"/>
        <dbReference type="EC" id="2.8.1.7"/>
    </reaction>
</comment>
<comment type="cofactor">
    <cofactor evidence="2">
        <name>pyridoxal 5'-phosphate</name>
        <dbReference type="ChEBI" id="CHEBI:597326"/>
    </cofactor>
</comment>
<comment type="subunit">
    <text evidence="2">Homodimer.</text>
</comment>
<comment type="similarity">
    <text evidence="4">Belongs to the class-V pyridoxal-phosphate-dependent aminotransferase family. NifS/IscS subfamily.</text>
</comment>
<organism>
    <name type="scientific">Klebsiella pneumoniae</name>
    <dbReference type="NCBI Taxonomy" id="573"/>
    <lineage>
        <taxon>Bacteria</taxon>
        <taxon>Pseudomonadati</taxon>
        <taxon>Pseudomonadota</taxon>
        <taxon>Gammaproteobacteria</taxon>
        <taxon>Enterobacterales</taxon>
        <taxon>Enterobacteriaceae</taxon>
        <taxon>Klebsiella/Raoultella group</taxon>
        <taxon>Klebsiella</taxon>
        <taxon>Klebsiella pneumoniae complex</taxon>
    </lineage>
</organism>
<name>NIFS_KLEPN</name>
<feature type="chain" id="PRO_0000150256" description="Cysteine desulfurase">
    <location>
        <begin position="1"/>
        <end position="397"/>
    </location>
</feature>
<feature type="active site" description="Cysteine persulfide intermediate" evidence="2">
    <location>
        <position position="321"/>
    </location>
</feature>
<feature type="binding site" evidence="1">
    <location>
        <position position="148"/>
    </location>
    <ligand>
        <name>pyridoxal 5'-phosphate</name>
        <dbReference type="ChEBI" id="CHEBI:597326"/>
    </ligand>
</feature>
<feature type="binding site" evidence="3">
    <location>
        <position position="176"/>
    </location>
    <ligand>
        <name>pyridoxal 5'-phosphate</name>
        <dbReference type="ChEBI" id="CHEBI:597326"/>
    </ligand>
</feature>
<feature type="binding site" evidence="3">
    <location>
        <begin position="196"/>
        <end position="198"/>
    </location>
    <ligand>
        <name>pyridoxal 5'-phosphate</name>
        <dbReference type="ChEBI" id="CHEBI:597326"/>
    </ligand>
</feature>
<feature type="binding site" evidence="3">
    <location>
        <position position="234"/>
    </location>
    <ligand>
        <name>pyridoxal 5'-phosphate</name>
        <dbReference type="ChEBI" id="CHEBI:597326"/>
    </ligand>
</feature>
<feature type="binding site" description="via persulfide group" evidence="1">
    <location>
        <position position="321"/>
    </location>
    <ligand>
        <name>[2Fe-2S] cluster</name>
        <dbReference type="ChEBI" id="CHEBI:190135"/>
    </ligand>
</feature>
<feature type="modified residue" description="N6-(pyridoxal phosphate)lysine" evidence="3">
    <location>
        <position position="199"/>
    </location>
</feature>
<feature type="sequence conflict" description="In Ref. 3; CAA31675." evidence="4" ref="3">
    <original>WPRATPRHA</original>
    <variation>CATEATATAIAS</variation>
    <location>
        <begin position="71"/>
        <end position="79"/>
    </location>
</feature>
<feature type="sequence conflict" description="In Ref. 3; CAA31675." evidence="4" ref="3">
    <original>L</original>
    <variation>M</variation>
    <location>
        <position position="107"/>
    </location>
</feature>
<feature type="sequence conflict" description="In Ref. 3; CAA31675." evidence="4" ref="3">
    <original>Q</original>
    <variation>E</variation>
    <location>
        <position position="110"/>
    </location>
</feature>
<feature type="sequence conflict" description="In Ref. 3; CAA31675." evidence="4" ref="3">
    <original>S</original>
    <variation>G</variation>
    <location>
        <position position="121"/>
    </location>
</feature>
<feature type="sequence conflict" description="In Ref. 2; AAA25156." evidence="4" ref="2">
    <original>D</original>
    <variation>H</variation>
    <location>
        <position position="191"/>
    </location>
</feature>
<feature type="sequence conflict" description="In Ref. 2; AAA25156." evidence="4" ref="2">
    <original>G</original>
    <variation>P</variation>
    <location>
        <position position="202"/>
    </location>
</feature>
<feature type="sequence conflict" description="In Ref. 3; CAA31675." evidence="4" ref="3">
    <original>R</original>
    <variation>A</variation>
    <location>
        <position position="287"/>
    </location>
</feature>
<proteinExistence type="inferred from homology"/>
<dbReference type="EC" id="2.8.1.7" evidence="2"/>
<dbReference type="EMBL" id="X12600">
    <property type="protein sequence ID" value="CAA31118.1"/>
    <property type="molecule type" value="Genomic_DNA"/>
</dbReference>
<dbReference type="EMBL" id="M17350">
    <property type="protein sequence ID" value="AAA25156.1"/>
    <property type="molecule type" value="Genomic_DNA"/>
</dbReference>
<dbReference type="EMBL" id="X13303">
    <property type="protein sequence ID" value="CAA31675.1"/>
    <property type="molecule type" value="Genomic_DNA"/>
</dbReference>
<dbReference type="PIR" id="S02507">
    <property type="entry name" value="S02507"/>
</dbReference>
<dbReference type="SMR" id="P05344"/>
<dbReference type="GO" id="GO:0031071">
    <property type="term" value="F:cysteine desulfurase activity"/>
    <property type="evidence" value="ECO:0007669"/>
    <property type="project" value="UniProtKB-EC"/>
</dbReference>
<dbReference type="GO" id="GO:0051536">
    <property type="term" value="F:iron-sulfur cluster binding"/>
    <property type="evidence" value="ECO:0007669"/>
    <property type="project" value="UniProtKB-KW"/>
</dbReference>
<dbReference type="GO" id="GO:0046872">
    <property type="term" value="F:metal ion binding"/>
    <property type="evidence" value="ECO:0007669"/>
    <property type="project" value="UniProtKB-KW"/>
</dbReference>
<dbReference type="GO" id="GO:0030170">
    <property type="term" value="F:pyridoxal phosphate binding"/>
    <property type="evidence" value="ECO:0007669"/>
    <property type="project" value="InterPro"/>
</dbReference>
<dbReference type="GO" id="GO:0006520">
    <property type="term" value="P:amino acid metabolic process"/>
    <property type="evidence" value="ECO:0007669"/>
    <property type="project" value="InterPro"/>
</dbReference>
<dbReference type="GO" id="GO:0009399">
    <property type="term" value="P:nitrogen fixation"/>
    <property type="evidence" value="ECO:0007669"/>
    <property type="project" value="UniProtKB-KW"/>
</dbReference>
<dbReference type="FunFam" id="3.40.640.10:FF:000084">
    <property type="entry name" value="IscS-like cysteine desulfurase"/>
    <property type="match status" value="1"/>
</dbReference>
<dbReference type="Gene3D" id="1.10.260.50">
    <property type="match status" value="1"/>
</dbReference>
<dbReference type="Gene3D" id="3.90.1150.10">
    <property type="entry name" value="Aspartate Aminotransferase, domain 1"/>
    <property type="match status" value="1"/>
</dbReference>
<dbReference type="Gene3D" id="3.40.640.10">
    <property type="entry name" value="Type I PLP-dependent aspartate aminotransferase-like (Major domain)"/>
    <property type="match status" value="1"/>
</dbReference>
<dbReference type="InterPro" id="IPR000192">
    <property type="entry name" value="Aminotrans_V_dom"/>
</dbReference>
<dbReference type="InterPro" id="IPR020578">
    <property type="entry name" value="Aminotrans_V_PyrdxlP_BS"/>
</dbReference>
<dbReference type="InterPro" id="IPR017772">
    <property type="entry name" value="Cys_deSase_NifS_bac/arc"/>
</dbReference>
<dbReference type="InterPro" id="IPR016454">
    <property type="entry name" value="Cysteine_dSase"/>
</dbReference>
<dbReference type="InterPro" id="IPR015424">
    <property type="entry name" value="PyrdxlP-dep_Trfase"/>
</dbReference>
<dbReference type="InterPro" id="IPR015421">
    <property type="entry name" value="PyrdxlP-dep_Trfase_major"/>
</dbReference>
<dbReference type="InterPro" id="IPR015422">
    <property type="entry name" value="PyrdxlP-dep_Trfase_small"/>
</dbReference>
<dbReference type="NCBIfam" id="TIGR03402">
    <property type="entry name" value="FeS_nifS"/>
    <property type="match status" value="1"/>
</dbReference>
<dbReference type="PANTHER" id="PTHR11601:SF34">
    <property type="entry name" value="CYSTEINE DESULFURASE"/>
    <property type="match status" value="1"/>
</dbReference>
<dbReference type="PANTHER" id="PTHR11601">
    <property type="entry name" value="CYSTEINE DESULFURYLASE FAMILY MEMBER"/>
    <property type="match status" value="1"/>
</dbReference>
<dbReference type="Pfam" id="PF00266">
    <property type="entry name" value="Aminotran_5"/>
    <property type="match status" value="1"/>
</dbReference>
<dbReference type="PIRSF" id="PIRSF005572">
    <property type="entry name" value="NifS"/>
    <property type="match status" value="1"/>
</dbReference>
<dbReference type="SUPFAM" id="SSF53383">
    <property type="entry name" value="PLP-dependent transferases"/>
    <property type="match status" value="1"/>
</dbReference>
<dbReference type="PROSITE" id="PS00595">
    <property type="entry name" value="AA_TRANSFER_CLASS_5"/>
    <property type="match status" value="1"/>
</dbReference>
<accession>P05344</accession>
<gene>
    <name evidence="2" type="primary">nifS</name>
</gene>